<organism>
    <name type="scientific">Mus musculus</name>
    <name type="common">Mouse</name>
    <dbReference type="NCBI Taxonomy" id="10090"/>
    <lineage>
        <taxon>Eukaryota</taxon>
        <taxon>Metazoa</taxon>
        <taxon>Chordata</taxon>
        <taxon>Craniata</taxon>
        <taxon>Vertebrata</taxon>
        <taxon>Euteleostomi</taxon>
        <taxon>Mammalia</taxon>
        <taxon>Eutheria</taxon>
        <taxon>Euarchontoglires</taxon>
        <taxon>Glires</taxon>
        <taxon>Rodentia</taxon>
        <taxon>Myomorpha</taxon>
        <taxon>Muroidea</taxon>
        <taxon>Muridae</taxon>
        <taxon>Murinae</taxon>
        <taxon>Mus</taxon>
        <taxon>Mus</taxon>
    </lineage>
</organism>
<gene>
    <name type="primary">Hnrnpm</name>
    <name type="synonym">Hnrpm</name>
</gene>
<evidence type="ECO:0000250" key="1"/>
<evidence type="ECO:0000250" key="2">
    <source>
        <dbReference type="UniProtKB" id="P52272"/>
    </source>
</evidence>
<evidence type="ECO:0000255" key="3">
    <source>
        <dbReference type="PROSITE-ProRule" id="PRU00176"/>
    </source>
</evidence>
<evidence type="ECO:0000256" key="4">
    <source>
        <dbReference type="SAM" id="MobiDB-lite"/>
    </source>
</evidence>
<evidence type="ECO:0000303" key="5">
    <source>
    </source>
</evidence>
<evidence type="ECO:0000305" key="6"/>
<evidence type="ECO:0007744" key="7">
    <source>
    </source>
</evidence>
<evidence type="ECO:0007744" key="8">
    <source>
    </source>
</evidence>
<evidence type="ECO:0007744" key="9">
    <source>
    </source>
</evidence>
<protein>
    <recommendedName>
        <fullName>Heterogeneous nuclear ribonucleoprotein M</fullName>
        <shortName>hnRNP M</shortName>
    </recommendedName>
</protein>
<name>HNRPM_MOUSE</name>
<proteinExistence type="evidence at protein level"/>
<comment type="function">
    <text evidence="1">Pre-mRNA binding protein in vivo, binds avidly to poly(G) and poly(U) RNA homopolymers in vitro. Involved in splicing. Acts as a receptor for carcinoembryonic antigen in Kupffer cells, may initiate a series of signaling events leading to tyrosine phosphorylation of proteins and induction of IL-1 alpha, IL-6, IL-10 and tumor necrosis factor alpha cytokines (By similarity).</text>
</comment>
<comment type="subunit">
    <text evidence="2">Identified in the spliceosome C complex (By similarity). Interacts with PPIA/CYPA (By similarity).</text>
</comment>
<comment type="subcellular location">
    <subcellularLocation>
        <location evidence="1">Nucleus</location>
    </subcellularLocation>
</comment>
<comment type="alternative products">
    <event type="alternative splicing"/>
    <isoform>
        <id>Q9D0E1-1</id>
        <name>1</name>
        <sequence type="displayed"/>
    </isoform>
    <isoform>
        <id>Q9D0E1-2</id>
        <name>2</name>
        <sequence type="described" ref="VSP_011933"/>
    </isoform>
</comment>
<comment type="PTM">
    <text evidence="1">Sumoylated.</text>
</comment>
<reference key="1">
    <citation type="journal article" date="2005" name="Science">
        <title>The transcriptional landscape of the mammalian genome.</title>
        <authorList>
            <person name="Carninci P."/>
            <person name="Kasukawa T."/>
            <person name="Katayama S."/>
            <person name="Gough J."/>
            <person name="Frith M.C."/>
            <person name="Maeda N."/>
            <person name="Oyama R."/>
            <person name="Ravasi T."/>
            <person name="Lenhard B."/>
            <person name="Wells C."/>
            <person name="Kodzius R."/>
            <person name="Shimokawa K."/>
            <person name="Bajic V.B."/>
            <person name="Brenner S.E."/>
            <person name="Batalov S."/>
            <person name="Forrest A.R."/>
            <person name="Zavolan M."/>
            <person name="Davis M.J."/>
            <person name="Wilming L.G."/>
            <person name="Aidinis V."/>
            <person name="Allen J.E."/>
            <person name="Ambesi-Impiombato A."/>
            <person name="Apweiler R."/>
            <person name="Aturaliya R.N."/>
            <person name="Bailey T.L."/>
            <person name="Bansal M."/>
            <person name="Baxter L."/>
            <person name="Beisel K.W."/>
            <person name="Bersano T."/>
            <person name="Bono H."/>
            <person name="Chalk A.M."/>
            <person name="Chiu K.P."/>
            <person name="Choudhary V."/>
            <person name="Christoffels A."/>
            <person name="Clutterbuck D.R."/>
            <person name="Crowe M.L."/>
            <person name="Dalla E."/>
            <person name="Dalrymple B.P."/>
            <person name="de Bono B."/>
            <person name="Della Gatta G."/>
            <person name="di Bernardo D."/>
            <person name="Down T."/>
            <person name="Engstrom P."/>
            <person name="Fagiolini M."/>
            <person name="Faulkner G."/>
            <person name="Fletcher C.F."/>
            <person name="Fukushima T."/>
            <person name="Furuno M."/>
            <person name="Futaki S."/>
            <person name="Gariboldi M."/>
            <person name="Georgii-Hemming P."/>
            <person name="Gingeras T.R."/>
            <person name="Gojobori T."/>
            <person name="Green R.E."/>
            <person name="Gustincich S."/>
            <person name="Harbers M."/>
            <person name="Hayashi Y."/>
            <person name="Hensch T.K."/>
            <person name="Hirokawa N."/>
            <person name="Hill D."/>
            <person name="Huminiecki L."/>
            <person name="Iacono M."/>
            <person name="Ikeo K."/>
            <person name="Iwama A."/>
            <person name="Ishikawa T."/>
            <person name="Jakt M."/>
            <person name="Kanapin A."/>
            <person name="Katoh M."/>
            <person name="Kawasawa Y."/>
            <person name="Kelso J."/>
            <person name="Kitamura H."/>
            <person name="Kitano H."/>
            <person name="Kollias G."/>
            <person name="Krishnan S.P."/>
            <person name="Kruger A."/>
            <person name="Kummerfeld S.K."/>
            <person name="Kurochkin I.V."/>
            <person name="Lareau L.F."/>
            <person name="Lazarevic D."/>
            <person name="Lipovich L."/>
            <person name="Liu J."/>
            <person name="Liuni S."/>
            <person name="McWilliam S."/>
            <person name="Madan Babu M."/>
            <person name="Madera M."/>
            <person name="Marchionni L."/>
            <person name="Matsuda H."/>
            <person name="Matsuzawa S."/>
            <person name="Miki H."/>
            <person name="Mignone F."/>
            <person name="Miyake S."/>
            <person name="Morris K."/>
            <person name="Mottagui-Tabar S."/>
            <person name="Mulder N."/>
            <person name="Nakano N."/>
            <person name="Nakauchi H."/>
            <person name="Ng P."/>
            <person name="Nilsson R."/>
            <person name="Nishiguchi S."/>
            <person name="Nishikawa S."/>
            <person name="Nori F."/>
            <person name="Ohara O."/>
            <person name="Okazaki Y."/>
            <person name="Orlando V."/>
            <person name="Pang K.C."/>
            <person name="Pavan W.J."/>
            <person name="Pavesi G."/>
            <person name="Pesole G."/>
            <person name="Petrovsky N."/>
            <person name="Piazza S."/>
            <person name="Reed J."/>
            <person name="Reid J.F."/>
            <person name="Ring B.Z."/>
            <person name="Ringwald M."/>
            <person name="Rost B."/>
            <person name="Ruan Y."/>
            <person name="Salzberg S.L."/>
            <person name="Sandelin A."/>
            <person name="Schneider C."/>
            <person name="Schoenbach C."/>
            <person name="Sekiguchi K."/>
            <person name="Semple C.A."/>
            <person name="Seno S."/>
            <person name="Sessa L."/>
            <person name="Sheng Y."/>
            <person name="Shibata Y."/>
            <person name="Shimada H."/>
            <person name="Shimada K."/>
            <person name="Silva D."/>
            <person name="Sinclair B."/>
            <person name="Sperling S."/>
            <person name="Stupka E."/>
            <person name="Sugiura K."/>
            <person name="Sultana R."/>
            <person name="Takenaka Y."/>
            <person name="Taki K."/>
            <person name="Tammoja K."/>
            <person name="Tan S.L."/>
            <person name="Tang S."/>
            <person name="Taylor M.S."/>
            <person name="Tegner J."/>
            <person name="Teichmann S.A."/>
            <person name="Ueda H.R."/>
            <person name="van Nimwegen E."/>
            <person name="Verardo R."/>
            <person name="Wei C.L."/>
            <person name="Yagi K."/>
            <person name="Yamanishi H."/>
            <person name="Zabarovsky E."/>
            <person name="Zhu S."/>
            <person name="Zimmer A."/>
            <person name="Hide W."/>
            <person name="Bult C."/>
            <person name="Grimmond S.M."/>
            <person name="Teasdale R.D."/>
            <person name="Liu E.T."/>
            <person name="Brusic V."/>
            <person name="Quackenbush J."/>
            <person name="Wahlestedt C."/>
            <person name="Mattick J.S."/>
            <person name="Hume D.A."/>
            <person name="Kai C."/>
            <person name="Sasaki D."/>
            <person name="Tomaru Y."/>
            <person name="Fukuda S."/>
            <person name="Kanamori-Katayama M."/>
            <person name="Suzuki M."/>
            <person name="Aoki J."/>
            <person name="Arakawa T."/>
            <person name="Iida J."/>
            <person name="Imamura K."/>
            <person name="Itoh M."/>
            <person name="Kato T."/>
            <person name="Kawaji H."/>
            <person name="Kawagashira N."/>
            <person name="Kawashima T."/>
            <person name="Kojima M."/>
            <person name="Kondo S."/>
            <person name="Konno H."/>
            <person name="Nakano K."/>
            <person name="Ninomiya N."/>
            <person name="Nishio T."/>
            <person name="Okada M."/>
            <person name="Plessy C."/>
            <person name="Shibata K."/>
            <person name="Shiraki T."/>
            <person name="Suzuki S."/>
            <person name="Tagami M."/>
            <person name="Waki K."/>
            <person name="Watahiki A."/>
            <person name="Okamura-Oho Y."/>
            <person name="Suzuki H."/>
            <person name="Kawai J."/>
            <person name="Hayashizaki Y."/>
        </authorList>
    </citation>
    <scope>NUCLEOTIDE SEQUENCE [LARGE SCALE MRNA] (ISOFORM 1)</scope>
    <source>
        <strain>C57BL/6J</strain>
    </source>
</reference>
<reference key="2">
    <citation type="journal article" date="2004" name="Genome Res.">
        <title>The status, quality, and expansion of the NIH full-length cDNA project: the Mammalian Gene Collection (MGC).</title>
        <authorList>
            <consortium name="The MGC Project Team"/>
        </authorList>
    </citation>
    <scope>NUCLEOTIDE SEQUENCE [LARGE SCALE MRNA] (ISOFORM 2)</scope>
    <source>
        <strain>C57BL/6J</strain>
        <strain>FVB/N</strain>
        <tissue>Brain</tissue>
        <tissue>Mammary tumor</tissue>
    </source>
</reference>
<reference key="3">
    <citation type="submission" date="2009-01" db="UniProtKB">
        <authorList>
            <person name="Lubec G."/>
            <person name="Sunyer B."/>
            <person name="Chen W.-Q."/>
        </authorList>
    </citation>
    <scope>PROTEIN SEQUENCE OF 449-455</scope>
    <scope>IDENTIFICATION BY MASS SPECTROMETRY</scope>
    <source>
        <strain>OF1</strain>
        <tissue>Hippocampus</tissue>
    </source>
</reference>
<reference key="4">
    <citation type="journal article" date="2004" name="Mol. Cell. Proteomics">
        <title>Phosphoproteomic analysis of the developing mouse brain.</title>
        <authorList>
            <person name="Ballif B.A."/>
            <person name="Villen J."/>
            <person name="Beausoleil S.A."/>
            <person name="Schwartz D."/>
            <person name="Gygi S.P."/>
        </authorList>
    </citation>
    <scope>PHOSPHORYLATION [LARGE SCALE ANALYSIS] AT SER-617</scope>
    <scope>IDENTIFICATION BY MASS SPECTROMETRY [LARGE SCALE ANALYSIS]</scope>
    <source>
        <tissue>Embryonic brain</tissue>
    </source>
</reference>
<reference key="5">
    <citation type="journal article" date="2010" name="Cell">
        <title>A tissue-specific atlas of mouse protein phosphorylation and expression.</title>
        <authorList>
            <person name="Huttlin E.L."/>
            <person name="Jedrychowski M.P."/>
            <person name="Elias J.E."/>
            <person name="Goswami T."/>
            <person name="Rad R."/>
            <person name="Beausoleil S.A."/>
            <person name="Villen J."/>
            <person name="Haas W."/>
            <person name="Sowa M.E."/>
            <person name="Gygi S.P."/>
        </authorList>
    </citation>
    <scope>PHOSPHORYLATION [LARGE SCALE ANALYSIS] AT SER-700</scope>
    <scope>IDENTIFICATION BY MASS SPECTROMETRY [LARGE SCALE ANALYSIS]</scope>
    <source>
        <tissue>Brain</tissue>
        <tissue>Brown adipose tissue</tissue>
        <tissue>Heart</tissue>
        <tissue>Kidney</tissue>
        <tissue>Liver</tissue>
        <tissue>Lung</tissue>
        <tissue>Pancreas</tissue>
        <tissue>Spleen</tissue>
        <tissue>Testis</tissue>
    </source>
</reference>
<reference key="6">
    <citation type="journal article" date="2013" name="Mol. Cell">
        <title>SIRT5-mediated lysine desuccinylation impacts diverse metabolic pathways.</title>
        <authorList>
            <person name="Park J."/>
            <person name="Chen Y."/>
            <person name="Tishkoff D.X."/>
            <person name="Peng C."/>
            <person name="Tan M."/>
            <person name="Dai L."/>
            <person name="Xie Z."/>
            <person name="Zhang Y."/>
            <person name="Zwaans B.M."/>
            <person name="Skinner M.E."/>
            <person name="Lombard D.B."/>
            <person name="Zhao Y."/>
        </authorList>
    </citation>
    <scope>ACETYLATION [LARGE SCALE ANALYSIS] AT LYS-133; LYS-671 AND LYS-697</scope>
    <scope>IDENTIFICATION BY MASS SPECTROMETRY [LARGE SCALE ANALYSIS]</scope>
    <source>
        <tissue>Embryonic fibroblast</tissue>
    </source>
</reference>
<dbReference type="EMBL" id="AK011521">
    <property type="protein sequence ID" value="BAB27675.1"/>
    <property type="molecule type" value="mRNA"/>
</dbReference>
<dbReference type="EMBL" id="BC005758">
    <property type="protein sequence ID" value="AAH05758.1"/>
    <property type="molecule type" value="mRNA"/>
</dbReference>
<dbReference type="EMBL" id="BC065172">
    <property type="protein sequence ID" value="AAH65172.1"/>
    <property type="molecule type" value="mRNA"/>
</dbReference>
<dbReference type="CCDS" id="CCDS37570.1">
    <molecule id="Q9D0E1-1"/>
</dbReference>
<dbReference type="CCDS" id="CCDS50068.1">
    <molecule id="Q9D0E1-2"/>
</dbReference>
<dbReference type="RefSeq" id="NP_001103383.1">
    <molecule id="Q9D0E1-2"/>
    <property type="nucleotide sequence ID" value="NM_001109913.1"/>
</dbReference>
<dbReference type="RefSeq" id="NP_084080.1">
    <molecule id="Q9D0E1-1"/>
    <property type="nucleotide sequence ID" value="NM_029804.3"/>
</dbReference>
<dbReference type="SMR" id="Q9D0E1"/>
<dbReference type="BioGRID" id="218411">
    <property type="interactions" value="52"/>
</dbReference>
<dbReference type="CORUM" id="Q9D0E1"/>
<dbReference type="FunCoup" id="Q9D0E1">
    <property type="interactions" value="3723"/>
</dbReference>
<dbReference type="IntAct" id="Q9D0E1">
    <property type="interactions" value="10"/>
</dbReference>
<dbReference type="MINT" id="Q9D0E1"/>
<dbReference type="STRING" id="10090.ENSMUSP00000120115"/>
<dbReference type="GlyGen" id="Q9D0E1">
    <property type="glycosylation" value="1 site, 1 O-linked glycan (1 site)"/>
</dbReference>
<dbReference type="iPTMnet" id="Q9D0E1"/>
<dbReference type="PhosphoSitePlus" id="Q9D0E1"/>
<dbReference type="SwissPalm" id="Q9D0E1"/>
<dbReference type="jPOST" id="Q9D0E1"/>
<dbReference type="PaxDb" id="10090-ENSMUSP00000120115"/>
<dbReference type="PeptideAtlas" id="Q9D0E1"/>
<dbReference type="ProteomicsDB" id="273313">
    <molecule id="Q9D0E1-1"/>
</dbReference>
<dbReference type="ProteomicsDB" id="273314">
    <molecule id="Q9D0E1-2"/>
</dbReference>
<dbReference type="Pumba" id="Q9D0E1"/>
<dbReference type="Antibodypedia" id="4238">
    <property type="antibodies" value="497 antibodies from 34 providers"/>
</dbReference>
<dbReference type="DNASU" id="76936"/>
<dbReference type="Ensembl" id="ENSMUST00000087582.13">
    <molecule id="Q9D0E1-2"/>
    <property type="protein sequence ID" value="ENSMUSP00000084864.6"/>
    <property type="gene ID" value="ENSMUSG00000059208.16"/>
</dbReference>
<dbReference type="Ensembl" id="ENSMUST00000148178.8">
    <molecule id="Q9D0E1-1"/>
    <property type="protein sequence ID" value="ENSMUSP00000120115.2"/>
    <property type="gene ID" value="ENSMUSG00000059208.16"/>
</dbReference>
<dbReference type="GeneID" id="76936"/>
<dbReference type="KEGG" id="mmu:76936"/>
<dbReference type="UCSC" id="uc008bze.2">
    <molecule id="Q9D0E1-1"/>
    <property type="organism name" value="mouse"/>
</dbReference>
<dbReference type="AGR" id="MGI:1926465"/>
<dbReference type="CTD" id="4670"/>
<dbReference type="MGI" id="MGI:1926465">
    <property type="gene designation" value="Hnrnpm"/>
</dbReference>
<dbReference type="VEuPathDB" id="HostDB:ENSMUSG00000059208"/>
<dbReference type="eggNOG" id="KOG4212">
    <property type="taxonomic scope" value="Eukaryota"/>
</dbReference>
<dbReference type="GeneTree" id="ENSGT00940000154595"/>
<dbReference type="HOGENOM" id="CLU_019566_1_0_1"/>
<dbReference type="InParanoid" id="Q9D0E1"/>
<dbReference type="OMA" id="SMFDRQM"/>
<dbReference type="OrthoDB" id="610462at2759"/>
<dbReference type="PhylomeDB" id="Q9D0E1"/>
<dbReference type="TreeFam" id="TF313406"/>
<dbReference type="BioGRID-ORCS" id="76936">
    <property type="hits" value="8 hits in 79 CRISPR screens"/>
</dbReference>
<dbReference type="CD-CODE" id="CE726F99">
    <property type="entry name" value="Postsynaptic density"/>
</dbReference>
<dbReference type="CD-CODE" id="DE1E139C">
    <property type="entry name" value="Chromatoid body"/>
</dbReference>
<dbReference type="ChiTaRS" id="Hnrnpm">
    <property type="organism name" value="mouse"/>
</dbReference>
<dbReference type="PRO" id="PR:Q9D0E1"/>
<dbReference type="Proteomes" id="UP000000589">
    <property type="component" value="Chromosome 17"/>
</dbReference>
<dbReference type="RNAct" id="Q9D0E1">
    <property type="molecule type" value="protein"/>
</dbReference>
<dbReference type="Bgee" id="ENSMUSG00000059208">
    <property type="expression patterns" value="Expressed in embryonic post-anal tail and 268 other cell types or tissues"/>
</dbReference>
<dbReference type="ExpressionAtlas" id="Q9D0E1">
    <property type="expression patterns" value="baseline and differential"/>
</dbReference>
<dbReference type="GO" id="GO:0071013">
    <property type="term" value="C:catalytic step 2 spliceosome"/>
    <property type="evidence" value="ECO:0007669"/>
    <property type="project" value="Ensembl"/>
</dbReference>
<dbReference type="GO" id="GO:0062023">
    <property type="term" value="C:collagen-containing extracellular matrix"/>
    <property type="evidence" value="ECO:0007005"/>
    <property type="project" value="UniProtKB"/>
</dbReference>
<dbReference type="GO" id="GO:0016363">
    <property type="term" value="C:nuclear matrix"/>
    <property type="evidence" value="ECO:0007669"/>
    <property type="project" value="Ensembl"/>
</dbReference>
<dbReference type="GO" id="GO:0042382">
    <property type="term" value="C:paraspeckles"/>
    <property type="evidence" value="ECO:0007669"/>
    <property type="project" value="Ensembl"/>
</dbReference>
<dbReference type="GO" id="GO:0045202">
    <property type="term" value="C:synapse"/>
    <property type="evidence" value="ECO:0000314"/>
    <property type="project" value="SynGO"/>
</dbReference>
<dbReference type="GO" id="GO:0019904">
    <property type="term" value="F:protein domain specific binding"/>
    <property type="evidence" value="ECO:0007669"/>
    <property type="project" value="Ensembl"/>
</dbReference>
<dbReference type="GO" id="GO:0003723">
    <property type="term" value="F:RNA binding"/>
    <property type="evidence" value="ECO:0007669"/>
    <property type="project" value="UniProtKB-KW"/>
</dbReference>
<dbReference type="GO" id="GO:0000380">
    <property type="term" value="P:alternative mRNA splicing, via spliceosome"/>
    <property type="evidence" value="ECO:0007669"/>
    <property type="project" value="Ensembl"/>
</dbReference>
<dbReference type="CDD" id="cd12657">
    <property type="entry name" value="RRM1_hnRNPM"/>
    <property type="match status" value="1"/>
</dbReference>
<dbReference type="CDD" id="cd12659">
    <property type="entry name" value="RRM2_hnRNPM"/>
    <property type="match status" value="1"/>
</dbReference>
<dbReference type="CDD" id="cd12661">
    <property type="entry name" value="RRM3_hnRNPM"/>
    <property type="match status" value="1"/>
</dbReference>
<dbReference type="FunFam" id="3.30.70.330:FF:000033">
    <property type="entry name" value="heterogeneous nuclear ribonucleoprotein M isoform X1"/>
    <property type="match status" value="1"/>
</dbReference>
<dbReference type="FunFam" id="3.30.70.330:FF:000034">
    <property type="entry name" value="heterogeneous nuclear ribonucleoprotein M isoform X1"/>
    <property type="match status" value="1"/>
</dbReference>
<dbReference type="FunFam" id="3.30.70.330:FF:000548">
    <property type="entry name" value="Myelin expression factor 2"/>
    <property type="match status" value="1"/>
</dbReference>
<dbReference type="Gene3D" id="3.30.70.330">
    <property type="match status" value="3"/>
</dbReference>
<dbReference type="InterPro" id="IPR024666">
    <property type="entry name" value="HnRNP_M_PY-NLS"/>
</dbReference>
<dbReference type="InterPro" id="IPR034990">
    <property type="entry name" value="hnRNPM_RRM3"/>
</dbReference>
<dbReference type="InterPro" id="IPR012677">
    <property type="entry name" value="Nucleotide-bd_a/b_plait_sf"/>
</dbReference>
<dbReference type="InterPro" id="IPR035979">
    <property type="entry name" value="RBD_domain_sf"/>
</dbReference>
<dbReference type="InterPro" id="IPR000504">
    <property type="entry name" value="RRM_dom"/>
</dbReference>
<dbReference type="InterPro" id="IPR050374">
    <property type="entry name" value="RRT5_SRSF_SR"/>
</dbReference>
<dbReference type="PANTHER" id="PTHR23003">
    <property type="entry name" value="RNA RECOGNITION MOTIF RRM DOMAIN CONTAINING PROTEIN"/>
    <property type="match status" value="1"/>
</dbReference>
<dbReference type="Pfam" id="PF11532">
    <property type="entry name" value="HnRNP_M_NLS"/>
    <property type="match status" value="1"/>
</dbReference>
<dbReference type="Pfam" id="PF00076">
    <property type="entry name" value="RRM_1"/>
    <property type="match status" value="3"/>
</dbReference>
<dbReference type="SMART" id="SM00360">
    <property type="entry name" value="RRM"/>
    <property type="match status" value="3"/>
</dbReference>
<dbReference type="SUPFAM" id="SSF54928">
    <property type="entry name" value="RNA-binding domain, RBD"/>
    <property type="match status" value="3"/>
</dbReference>
<dbReference type="PROSITE" id="PS50102">
    <property type="entry name" value="RRM"/>
    <property type="match status" value="3"/>
</dbReference>
<feature type="initiator methionine" description="Removed" evidence="2">
    <location>
        <position position="1"/>
    </location>
</feature>
<feature type="chain" id="PRO_0000081865" description="Heterogeneous nuclear ribonucleoprotein M">
    <location>
        <begin position="2"/>
        <end position="729"/>
    </location>
</feature>
<feature type="domain" description="RRM 1" evidence="3">
    <location>
        <begin position="70"/>
        <end position="148"/>
    </location>
</feature>
<feature type="domain" description="RRM 2" evidence="3">
    <location>
        <begin position="203"/>
        <end position="280"/>
    </location>
</feature>
<feature type="repeat" description="1">
    <location>
        <begin position="399"/>
        <end position="404"/>
    </location>
</feature>
<feature type="repeat" description="2">
    <location>
        <begin position="406"/>
        <end position="411"/>
    </location>
</feature>
<feature type="repeat" description="3">
    <location>
        <begin position="414"/>
        <end position="419"/>
    </location>
</feature>
<feature type="repeat" description="4">
    <location>
        <begin position="425"/>
        <end position="430"/>
    </location>
</feature>
<feature type="repeat" description="5">
    <location>
        <begin position="432"/>
        <end position="437"/>
    </location>
</feature>
<feature type="repeat" description="6">
    <location>
        <begin position="439"/>
        <end position="444"/>
    </location>
</feature>
<feature type="repeat" description="7">
    <location>
        <begin position="445"/>
        <end position="450"/>
    </location>
</feature>
<feature type="repeat" description="8">
    <location>
        <begin position="452"/>
        <end position="457"/>
    </location>
</feature>
<feature type="repeat" description="9">
    <location>
        <begin position="460"/>
        <end position="465"/>
    </location>
</feature>
<feature type="repeat" description="10">
    <location>
        <begin position="467"/>
        <end position="472"/>
    </location>
</feature>
<feature type="repeat" description="11">
    <location>
        <begin position="474"/>
        <end position="479"/>
    </location>
</feature>
<feature type="repeat" description="12">
    <location>
        <begin position="481"/>
        <end position="486"/>
    </location>
</feature>
<feature type="repeat" description="13">
    <location>
        <begin position="492"/>
        <end position="497"/>
    </location>
</feature>
<feature type="repeat" description="14">
    <location>
        <begin position="499"/>
        <end position="504"/>
    </location>
</feature>
<feature type="repeat" description="15">
    <location>
        <begin position="506"/>
        <end position="511"/>
    </location>
</feature>
<feature type="repeat" description="16">
    <location>
        <begin position="513"/>
        <end position="518"/>
    </location>
</feature>
<feature type="repeat" description="17">
    <location>
        <begin position="520"/>
        <end position="525"/>
    </location>
</feature>
<feature type="repeat" description="18">
    <location>
        <begin position="527"/>
        <end position="532"/>
    </location>
</feature>
<feature type="repeat" description="19">
    <location>
        <begin position="539"/>
        <end position="544"/>
    </location>
</feature>
<feature type="repeat" description="20">
    <location>
        <begin position="546"/>
        <end position="551"/>
    </location>
</feature>
<feature type="repeat" description="21">
    <location>
        <begin position="553"/>
        <end position="558"/>
    </location>
</feature>
<feature type="repeat" description="22">
    <location>
        <begin position="561"/>
        <end position="566"/>
    </location>
</feature>
<feature type="repeat" description="23">
    <location>
        <begin position="567"/>
        <end position="571"/>
    </location>
</feature>
<feature type="repeat" description="24">
    <location>
        <begin position="574"/>
        <end position="579"/>
    </location>
</feature>
<feature type="repeat" description="25">
    <location>
        <begin position="580"/>
        <end position="584"/>
    </location>
</feature>
<feature type="repeat" description="26">
    <location>
        <begin position="587"/>
        <end position="592"/>
    </location>
</feature>
<feature type="repeat" description="27">
    <location>
        <begin position="602"/>
        <end position="607"/>
    </location>
</feature>
<feature type="domain" description="RRM 3" evidence="3">
    <location>
        <begin position="652"/>
        <end position="728"/>
    </location>
</feature>
<feature type="region of interest" description="Disordered" evidence="4">
    <location>
        <begin position="1"/>
        <end position="65"/>
    </location>
</feature>
<feature type="region of interest" description="27 X 6 AA repeats of [GEVSTPAN]-[ILMV]-[DE]-[RH]-[MLVI]-[GAV]">
    <location>
        <begin position="399"/>
        <end position="607"/>
    </location>
</feature>
<feature type="compositionally biased region" description="Low complexity" evidence="4">
    <location>
        <begin position="1"/>
        <end position="13"/>
    </location>
</feature>
<feature type="compositionally biased region" description="Basic and acidic residues" evidence="4">
    <location>
        <begin position="37"/>
        <end position="49"/>
    </location>
</feature>
<feature type="modified residue" description="N-acetylalanine" evidence="2">
    <location>
        <position position="2"/>
    </location>
</feature>
<feature type="modified residue" description="Phosphoserine" evidence="2">
    <location>
        <position position="29"/>
    </location>
</feature>
<feature type="modified residue" description="Phosphoserine" evidence="2">
    <location>
        <position position="85"/>
    </location>
</feature>
<feature type="modified residue" description="N6-acetyllysine; alternate" evidence="9">
    <location>
        <position position="133"/>
    </location>
</feature>
<feature type="modified residue" description="Phosphoserine" evidence="2">
    <location>
        <position position="203"/>
    </location>
</feature>
<feature type="modified residue" description="N6-acetyllysine; alternate" evidence="2">
    <location>
        <position position="276"/>
    </location>
</feature>
<feature type="modified residue" description="Phosphoserine" evidence="2">
    <location>
        <position position="364"/>
    </location>
</feature>
<feature type="modified residue" description="Phosphoserine" evidence="2">
    <location>
        <position position="376"/>
    </location>
</feature>
<feature type="modified residue" description="Phosphoserine" evidence="2">
    <location>
        <position position="396"/>
    </location>
</feature>
<feature type="modified residue" description="Phosphoserine" evidence="2">
    <location>
        <position position="431"/>
    </location>
</feature>
<feature type="modified residue" description="Phosphoserine" evidence="2">
    <location>
        <position position="451"/>
    </location>
</feature>
<feature type="modified residue" description="Phosphoserine" evidence="2">
    <location>
        <position position="467"/>
    </location>
</feature>
<feature type="modified residue" description="Phosphoserine" evidence="2">
    <location>
        <position position="480"/>
    </location>
</feature>
<feature type="modified residue" description="Omega-N-methylarginine" evidence="2">
    <location>
        <position position="495"/>
    </location>
</feature>
<feature type="modified residue" description="Phosphoserine" evidence="2">
    <location>
        <position position="527"/>
    </location>
</feature>
<feature type="modified residue" description="Phosphoserine" evidence="2">
    <location>
        <position position="574"/>
    </location>
</feature>
<feature type="modified residue" description="Phosphoserine" evidence="2">
    <location>
        <position position="587"/>
    </location>
</feature>
<feature type="modified residue" description="Phosphoserine" evidence="7">
    <location>
        <position position="617"/>
    </location>
</feature>
<feature type="modified residue" description="Phosphoserine" evidence="2">
    <location>
        <position position="632"/>
    </location>
</feature>
<feature type="modified residue" description="Phosphoserine" evidence="2">
    <location>
        <position position="636"/>
    </location>
</feature>
<feature type="modified residue" description="Phosphothreonine" evidence="2">
    <location>
        <position position="664"/>
    </location>
</feature>
<feature type="modified residue" description="N6-acetyllysine" evidence="9">
    <location>
        <position position="671"/>
    </location>
</feature>
<feature type="modified residue" description="N6-acetyllysine; alternate" evidence="9">
    <location>
        <position position="697"/>
    </location>
</feature>
<feature type="modified residue" description="Phosphoserine" evidence="8">
    <location>
        <position position="700"/>
    </location>
</feature>
<feature type="cross-link" description="Glycyl lysine isopeptide (Lys-Gly) (interchain with G-Cter in SUMO2)" evidence="2">
    <location>
        <position position="17"/>
    </location>
</feature>
<feature type="cross-link" description="Glycyl lysine isopeptide (Lys-Gly) (interchain with G-Cter in SUMO2)" evidence="2">
    <location>
        <position position="37"/>
    </location>
</feature>
<feature type="cross-link" description="Glycyl lysine isopeptide (Lys-Gly) (interchain with G-Cter in SUMO2)" evidence="2">
    <location>
        <position position="68"/>
    </location>
</feature>
<feature type="cross-link" description="Glycyl lysine isopeptide (Lys-Gly) (interchain with G-Cter in SUMO2)" evidence="2">
    <location>
        <position position="82"/>
    </location>
</feature>
<feature type="cross-link" description="Glycyl lysine isopeptide (Lys-Gly) (interchain with G-Cter in SUMO2)" evidence="2">
    <location>
        <position position="87"/>
    </location>
</feature>
<feature type="cross-link" description="Glycyl lysine isopeptide (Lys-Gly) (interchain with G-Cter in SUMO2)" evidence="2">
    <location>
        <position position="126"/>
    </location>
</feature>
<feature type="cross-link" description="Glycyl lysine isopeptide (Lys-Gly) (interchain with G-Cter in SUMO2); alternate" evidence="2">
    <location>
        <position position="133"/>
    </location>
</feature>
<feature type="cross-link" description="Glycyl lysine isopeptide (Lys-Gly) (interchain with G-Cter in SUMO2)" evidence="2">
    <location>
        <position position="142"/>
    </location>
</feature>
<feature type="cross-link" description="Glycyl lysine isopeptide (Lys-Gly) (interchain with G-Cter in SUMO2)" evidence="2">
    <location>
        <position position="144"/>
    </location>
</feature>
<feature type="cross-link" description="Glycyl lysine isopeptide (Lys-Gly) (interchain with G-Cter in SUMO2)" evidence="2">
    <location>
        <position position="220"/>
    </location>
</feature>
<feature type="cross-link" description="Glycyl lysine isopeptide (Lys-Gly) (interchain with G-Cter in SUMO2); alternate" evidence="2">
    <location>
        <position position="276"/>
    </location>
</feature>
<feature type="cross-link" description="Glycyl lysine isopeptide (Lys-Gly) (interchain with G-Cter in SUMO2)" evidence="2">
    <location>
        <position position="284"/>
    </location>
</feature>
<feature type="cross-link" description="Glycyl lysine isopeptide (Lys-Gly) (interchain with G-Cter in SUMO2)" evidence="2">
    <location>
        <position position="344"/>
    </location>
</feature>
<feature type="cross-link" description="Glycyl lysine isopeptide (Lys-Gly) (interchain with G-Cter in SUMO2)" evidence="2">
    <location>
        <position position="380"/>
    </location>
</feature>
<feature type="cross-link" description="Glycyl lysine isopeptide (Lys-Gly) (interchain with G-Cter in SUMO2)" evidence="2">
    <location>
        <position position="387"/>
    </location>
</feature>
<feature type="cross-link" description="Glycyl lysine isopeptide (Lys-Gly) (interchain with G-Cter in SUMO2)" evidence="2">
    <location>
        <position position="650"/>
    </location>
</feature>
<feature type="cross-link" description="Glycyl lysine isopeptide (Lys-Gly) (interchain with G-Cter in SUMO2)" evidence="2">
    <location>
        <position position="666"/>
    </location>
</feature>
<feature type="cross-link" description="Glycyl lysine isopeptide (Lys-Gly) (interchain with G-Cter in SUMO2)" evidence="2">
    <location>
        <position position="684"/>
    </location>
</feature>
<feature type="cross-link" description="Glycyl lysine isopeptide (Lys-Gly) (interchain with G-Cter in SUMO2)" evidence="2">
    <location>
        <position position="691"/>
    </location>
</feature>
<feature type="cross-link" description="Glycyl lysine isopeptide (Lys-Gly) (interchain with G-Cter in SUMO1); alternate" evidence="2">
    <location>
        <position position="697"/>
    </location>
</feature>
<feature type="cross-link" description="Glycyl lysine isopeptide (Lys-Gly) (interchain with G-Cter in SUMO2); alternate" evidence="2">
    <location>
        <position position="697"/>
    </location>
</feature>
<feature type="cross-link" description="Glycyl lysine isopeptide (Lys-Gly) (interchain with G-Cter in SUMO2)" evidence="2">
    <location>
        <position position="715"/>
    </location>
</feature>
<feature type="splice variant" id="VSP_011933" description="In isoform 2." evidence="5">
    <location>
        <begin position="159"/>
        <end position="197"/>
    </location>
</feature>
<feature type="sequence conflict" description="In Ref. 2; AAH05758." evidence="6" ref="2">
    <original>E</original>
    <variation>G</variation>
    <location>
        <position position="357"/>
    </location>
</feature>
<keyword id="KW-0007">Acetylation</keyword>
<keyword id="KW-0025">Alternative splicing</keyword>
<keyword id="KW-0903">Direct protein sequencing</keyword>
<keyword id="KW-1017">Isopeptide bond</keyword>
<keyword id="KW-0488">Methylation</keyword>
<keyword id="KW-0507">mRNA processing</keyword>
<keyword id="KW-0508">mRNA splicing</keyword>
<keyword id="KW-0539">Nucleus</keyword>
<keyword id="KW-0597">Phosphoprotein</keyword>
<keyword id="KW-1185">Reference proteome</keyword>
<keyword id="KW-0677">Repeat</keyword>
<keyword id="KW-0687">Ribonucleoprotein</keyword>
<keyword id="KW-0694">RNA-binding</keyword>
<keyword id="KW-0747">Spliceosome</keyword>
<keyword id="KW-0832">Ubl conjugation</keyword>
<accession>Q9D0E1</accession>
<accession>Q6P1B2</accession>
<accession>Q99JQ0</accession>
<sequence length="729" mass="77649">MAAGVEAAAEVAATEPKMEEESGAPCVPSGNGAPGPKGEERPTQNEKRKEKNIKRGGNRFEPYSNPTKRYRAFITNIPFDVKWQSLKDLVKEKVGEVTYVELLMDAEGKSRGCAVVEFKMEESMKKAAEVLNKHSLSGRPLKVKEDPDGEHARRAMQKVMATTGGMGMGPGGPGMINIPPSILNNPNIPNEIIHALQAGRLGSTVFVANLDYKVGWKKLKEVFSMAGVVVRADILEDKDGKSRGIGIVTFEQSIEAVQAISMFNGQLLFDRPMHVKMDERALPKGDFFPPERPQQLPHGLGGIGMGLGPGGQPIDANHLSKGIGMGNLGPAGMGMEGIGFGINKIGGMEGPFGGGMENMGRFGSGMNMGRINEILSNALKRGEIIAKQGGGGAGGSVPGIERMGPGIDRISGAGMERMGAGLGHGMDRVGSEIERMGLVMDRMGSVERMGSSIERMGPLGLDHMASSIERMGQTMERIGSGVERMGAGMGFGLERMAAPIDRVGQTIERMGSGVERMGPAIERMGLSMDRMVPTGMGASLERMGPVMDRMATGLERMGANNLERMGLERMGANSLERMGLERMGANSLERMGPAMGPALGAGIERMGLAMGGAGGASFDRAIEMERGNFGGSFAGSFGGAGGHAPGVARKACQIFVRNLPFDFTWKMLKDKFNECGHVLYADIKMENGKSKGCGVVKFESPEVAERACRMMNGMKLSGREIDVRIDRNA</sequence>